<comment type="function">
    <text evidence="1">Involved in the heme biosynthesis. Catalyzes the aerobic oxidative decarboxylation of propionate groups of rings A and B of coproporphyrinogen-III to yield the vinyl groups in protoporphyrinogen-IX.</text>
</comment>
<comment type="catalytic activity">
    <reaction evidence="1">
        <text>coproporphyrinogen III + O2 + 2 H(+) = protoporphyrinogen IX + 2 CO2 + 2 H2O</text>
        <dbReference type="Rhea" id="RHEA:18257"/>
        <dbReference type="ChEBI" id="CHEBI:15377"/>
        <dbReference type="ChEBI" id="CHEBI:15378"/>
        <dbReference type="ChEBI" id="CHEBI:15379"/>
        <dbReference type="ChEBI" id="CHEBI:16526"/>
        <dbReference type="ChEBI" id="CHEBI:57307"/>
        <dbReference type="ChEBI" id="CHEBI:57309"/>
        <dbReference type="EC" id="1.3.3.3"/>
    </reaction>
</comment>
<comment type="cofactor">
    <cofactor evidence="1">
        <name>a divalent metal cation</name>
        <dbReference type="ChEBI" id="CHEBI:60240"/>
    </cofactor>
</comment>
<comment type="pathway">
    <text evidence="1">Porphyrin-containing compound metabolism; protoporphyrin-IX biosynthesis; protoporphyrinogen-IX from coproporphyrinogen-III (O2 route): step 1/1.</text>
</comment>
<comment type="subunit">
    <text evidence="1">Homodimer.</text>
</comment>
<comment type="subcellular location">
    <subcellularLocation>
        <location evidence="1">Cytoplasm</location>
    </subcellularLocation>
</comment>
<comment type="similarity">
    <text evidence="1">Belongs to the aerobic coproporphyrinogen-III oxidase family.</text>
</comment>
<proteinExistence type="inferred from homology"/>
<organism>
    <name type="scientific">Salmonella gallinarum (strain 287/91 / NCTC 13346)</name>
    <dbReference type="NCBI Taxonomy" id="550538"/>
    <lineage>
        <taxon>Bacteria</taxon>
        <taxon>Pseudomonadati</taxon>
        <taxon>Pseudomonadota</taxon>
        <taxon>Gammaproteobacteria</taxon>
        <taxon>Enterobacterales</taxon>
        <taxon>Enterobacteriaceae</taxon>
        <taxon>Salmonella</taxon>
    </lineage>
</organism>
<name>HEM6_SALG2</name>
<reference key="1">
    <citation type="journal article" date="2008" name="Genome Res.">
        <title>Comparative genome analysis of Salmonella enteritidis PT4 and Salmonella gallinarum 287/91 provides insights into evolutionary and host adaptation pathways.</title>
        <authorList>
            <person name="Thomson N.R."/>
            <person name="Clayton D.J."/>
            <person name="Windhorst D."/>
            <person name="Vernikos G."/>
            <person name="Davidson S."/>
            <person name="Churcher C."/>
            <person name="Quail M.A."/>
            <person name="Stevens M."/>
            <person name="Jones M.A."/>
            <person name="Watson M."/>
            <person name="Barron A."/>
            <person name="Layton A."/>
            <person name="Pickard D."/>
            <person name="Kingsley R.A."/>
            <person name="Bignell A."/>
            <person name="Clark L."/>
            <person name="Harris B."/>
            <person name="Ormond D."/>
            <person name="Abdellah Z."/>
            <person name="Brooks K."/>
            <person name="Cherevach I."/>
            <person name="Chillingworth T."/>
            <person name="Woodward J."/>
            <person name="Norberczak H."/>
            <person name="Lord A."/>
            <person name="Arrowsmith C."/>
            <person name="Jagels K."/>
            <person name="Moule S."/>
            <person name="Mungall K."/>
            <person name="Saunders M."/>
            <person name="Whitehead S."/>
            <person name="Chabalgoity J.A."/>
            <person name="Maskell D."/>
            <person name="Humphreys T."/>
            <person name="Roberts M."/>
            <person name="Barrow P.A."/>
            <person name="Dougan G."/>
            <person name="Parkhill J."/>
        </authorList>
    </citation>
    <scope>NUCLEOTIDE SEQUENCE [LARGE SCALE GENOMIC DNA]</scope>
    <source>
        <strain>287/91 / NCTC 13346</strain>
    </source>
</reference>
<keyword id="KW-0963">Cytoplasm</keyword>
<keyword id="KW-0350">Heme biosynthesis</keyword>
<keyword id="KW-0479">Metal-binding</keyword>
<keyword id="KW-0560">Oxidoreductase</keyword>
<keyword id="KW-0627">Porphyrin biosynthesis</keyword>
<dbReference type="EC" id="1.3.3.3" evidence="1"/>
<dbReference type="EMBL" id="AM933173">
    <property type="protein sequence ID" value="CAR38309.1"/>
    <property type="molecule type" value="Genomic_DNA"/>
</dbReference>
<dbReference type="RefSeq" id="WP_000801326.1">
    <property type="nucleotide sequence ID" value="NC_011274.1"/>
</dbReference>
<dbReference type="SMR" id="B5RCS3"/>
<dbReference type="KEGG" id="seg:SG2483"/>
<dbReference type="HOGENOM" id="CLU_026169_0_1_6"/>
<dbReference type="UniPathway" id="UPA00251">
    <property type="reaction ID" value="UER00322"/>
</dbReference>
<dbReference type="Proteomes" id="UP000008321">
    <property type="component" value="Chromosome"/>
</dbReference>
<dbReference type="GO" id="GO:0005737">
    <property type="term" value="C:cytoplasm"/>
    <property type="evidence" value="ECO:0007669"/>
    <property type="project" value="UniProtKB-SubCell"/>
</dbReference>
<dbReference type="GO" id="GO:0004109">
    <property type="term" value="F:coproporphyrinogen oxidase activity"/>
    <property type="evidence" value="ECO:0007669"/>
    <property type="project" value="UniProtKB-UniRule"/>
</dbReference>
<dbReference type="GO" id="GO:0046872">
    <property type="term" value="F:metal ion binding"/>
    <property type="evidence" value="ECO:0007669"/>
    <property type="project" value="UniProtKB-KW"/>
</dbReference>
<dbReference type="GO" id="GO:0042803">
    <property type="term" value="F:protein homodimerization activity"/>
    <property type="evidence" value="ECO:0000250"/>
    <property type="project" value="UniProtKB"/>
</dbReference>
<dbReference type="GO" id="GO:0006782">
    <property type="term" value="P:protoporphyrinogen IX biosynthetic process"/>
    <property type="evidence" value="ECO:0007669"/>
    <property type="project" value="UniProtKB-UniRule"/>
</dbReference>
<dbReference type="FunFam" id="3.40.1500.10:FF:000001">
    <property type="entry name" value="Oxygen-dependent coproporphyrinogen-III oxidase"/>
    <property type="match status" value="1"/>
</dbReference>
<dbReference type="Gene3D" id="3.40.1500.10">
    <property type="entry name" value="Coproporphyrinogen III oxidase, aerobic"/>
    <property type="match status" value="1"/>
</dbReference>
<dbReference type="HAMAP" id="MF_00333">
    <property type="entry name" value="Coprogen_oxidas"/>
    <property type="match status" value="1"/>
</dbReference>
<dbReference type="InterPro" id="IPR001260">
    <property type="entry name" value="Coprogen_oxidase_aer"/>
</dbReference>
<dbReference type="InterPro" id="IPR036406">
    <property type="entry name" value="Coprogen_oxidase_aer_sf"/>
</dbReference>
<dbReference type="InterPro" id="IPR018375">
    <property type="entry name" value="Coprogen_oxidase_CS"/>
</dbReference>
<dbReference type="NCBIfam" id="NF003727">
    <property type="entry name" value="PRK05330.1"/>
    <property type="match status" value="1"/>
</dbReference>
<dbReference type="PANTHER" id="PTHR10755">
    <property type="entry name" value="COPROPORPHYRINOGEN III OXIDASE, MITOCHONDRIAL"/>
    <property type="match status" value="1"/>
</dbReference>
<dbReference type="PANTHER" id="PTHR10755:SF0">
    <property type="entry name" value="OXYGEN-DEPENDENT COPROPORPHYRINOGEN-III OXIDASE, MITOCHONDRIAL"/>
    <property type="match status" value="1"/>
</dbReference>
<dbReference type="Pfam" id="PF01218">
    <property type="entry name" value="Coprogen_oxidas"/>
    <property type="match status" value="1"/>
</dbReference>
<dbReference type="PIRSF" id="PIRSF000166">
    <property type="entry name" value="Coproporphyri_ox"/>
    <property type="match status" value="1"/>
</dbReference>
<dbReference type="PRINTS" id="PR00073">
    <property type="entry name" value="COPRGNOXDASE"/>
</dbReference>
<dbReference type="SUPFAM" id="SSF102886">
    <property type="entry name" value="Coproporphyrinogen III oxidase"/>
    <property type="match status" value="1"/>
</dbReference>
<dbReference type="PROSITE" id="PS01021">
    <property type="entry name" value="COPROGEN_OXIDASE"/>
    <property type="match status" value="1"/>
</dbReference>
<evidence type="ECO:0000255" key="1">
    <source>
        <dbReference type="HAMAP-Rule" id="MF_00333"/>
    </source>
</evidence>
<protein>
    <recommendedName>
        <fullName evidence="1">Oxygen-dependent coproporphyrinogen-III oxidase</fullName>
        <shortName evidence="1">CPO</shortName>
        <shortName evidence="1">Coprogen oxidase</shortName>
        <shortName evidence="1">Coproporphyrinogenase</shortName>
        <ecNumber evidence="1">1.3.3.3</ecNumber>
    </recommendedName>
</protein>
<sequence length="299" mass="34400">MKPDAHHVKQFLLRLQDDICQKLSAVDGANFVEDSWRREAGGGGRSRVLRNGGIFEQAGVNFSHVHGDAMPASATAHRPELAGRSFEAMGVSLVVHPHNPYIPTSHANVRFFIAEKPGADPVWWFGGGFDLTPYYGFEEDAVHWHRTARDLCQPFGDDVYPRYKKWCDDYFFLKHRNEQRGIGGLFFDDLNTPDFDHCFAFMQAVGNGYTEAYLPIVERRKAMVWGERERNFQLYRRGRYVEFNLVWDRGTLFGLQTGGRTESILMSMPPLVRWEYDWQPEAGSPEAALSEFIQVRDWI</sequence>
<feature type="chain" id="PRO_1000119821" description="Oxygen-dependent coproporphyrinogen-III oxidase">
    <location>
        <begin position="1"/>
        <end position="299"/>
    </location>
</feature>
<feature type="region of interest" description="Important for dimerization" evidence="1">
    <location>
        <begin position="240"/>
        <end position="275"/>
    </location>
</feature>
<feature type="active site" description="Proton donor" evidence="1">
    <location>
        <position position="106"/>
    </location>
</feature>
<feature type="binding site" evidence="1">
    <location>
        <position position="92"/>
    </location>
    <ligand>
        <name>substrate</name>
    </ligand>
</feature>
<feature type="binding site" evidence="1">
    <location>
        <position position="96"/>
    </location>
    <ligand>
        <name>a divalent metal cation</name>
        <dbReference type="ChEBI" id="CHEBI:60240"/>
    </ligand>
</feature>
<feature type="binding site" evidence="1">
    <location>
        <position position="106"/>
    </location>
    <ligand>
        <name>a divalent metal cation</name>
        <dbReference type="ChEBI" id="CHEBI:60240"/>
    </ligand>
</feature>
<feature type="binding site" evidence="1">
    <location>
        <begin position="108"/>
        <end position="110"/>
    </location>
    <ligand>
        <name>substrate</name>
    </ligand>
</feature>
<feature type="binding site" evidence="1">
    <location>
        <position position="145"/>
    </location>
    <ligand>
        <name>a divalent metal cation</name>
        <dbReference type="ChEBI" id="CHEBI:60240"/>
    </ligand>
</feature>
<feature type="binding site" evidence="1">
    <location>
        <position position="175"/>
    </location>
    <ligand>
        <name>a divalent metal cation</name>
        <dbReference type="ChEBI" id="CHEBI:60240"/>
    </ligand>
</feature>
<feature type="binding site" evidence="1">
    <location>
        <begin position="258"/>
        <end position="260"/>
    </location>
    <ligand>
        <name>substrate</name>
    </ligand>
</feature>
<feature type="site" description="Important for dimerization" evidence="1">
    <location>
        <position position="175"/>
    </location>
</feature>
<gene>
    <name evidence="1" type="primary">hemF</name>
    <name type="ordered locus">SG2483</name>
</gene>
<accession>B5RCS3</accession>